<keyword id="KW-0028">Amino-acid biosynthesis</keyword>
<keyword id="KW-0963">Cytoplasm</keyword>
<keyword id="KW-0413">Isomerase</keyword>
<keyword id="KW-0457">Lysine biosynthesis</keyword>
<accession>Q2NYV5</accession>
<proteinExistence type="inferred from homology"/>
<dbReference type="EC" id="5.1.1.7" evidence="1"/>
<dbReference type="EMBL" id="AP008229">
    <property type="protein sequence ID" value="BAE70522.1"/>
    <property type="molecule type" value="Genomic_DNA"/>
</dbReference>
<dbReference type="RefSeq" id="WP_011260363.1">
    <property type="nucleotide sequence ID" value="NC_007705.1"/>
</dbReference>
<dbReference type="SMR" id="Q2NYV5"/>
<dbReference type="KEGG" id="xom:XOO3767"/>
<dbReference type="HOGENOM" id="CLU_053306_1_1_6"/>
<dbReference type="UniPathway" id="UPA00034">
    <property type="reaction ID" value="UER00025"/>
</dbReference>
<dbReference type="GO" id="GO:0005829">
    <property type="term" value="C:cytosol"/>
    <property type="evidence" value="ECO:0007669"/>
    <property type="project" value="TreeGrafter"/>
</dbReference>
<dbReference type="GO" id="GO:0008837">
    <property type="term" value="F:diaminopimelate epimerase activity"/>
    <property type="evidence" value="ECO:0007669"/>
    <property type="project" value="UniProtKB-UniRule"/>
</dbReference>
<dbReference type="GO" id="GO:0009089">
    <property type="term" value="P:lysine biosynthetic process via diaminopimelate"/>
    <property type="evidence" value="ECO:0007669"/>
    <property type="project" value="UniProtKB-UniRule"/>
</dbReference>
<dbReference type="FunFam" id="3.10.310.10:FF:000001">
    <property type="entry name" value="Diaminopimelate epimerase"/>
    <property type="match status" value="1"/>
</dbReference>
<dbReference type="FunFam" id="3.10.310.10:FF:000004">
    <property type="entry name" value="Diaminopimelate epimerase"/>
    <property type="match status" value="1"/>
</dbReference>
<dbReference type="Gene3D" id="3.10.310.10">
    <property type="entry name" value="Diaminopimelate Epimerase, Chain A, domain 1"/>
    <property type="match status" value="2"/>
</dbReference>
<dbReference type="HAMAP" id="MF_00197">
    <property type="entry name" value="DAP_epimerase"/>
    <property type="match status" value="1"/>
</dbReference>
<dbReference type="InterPro" id="IPR018510">
    <property type="entry name" value="DAP_epimerase_AS"/>
</dbReference>
<dbReference type="InterPro" id="IPR001653">
    <property type="entry name" value="DAP_epimerase_DapF"/>
</dbReference>
<dbReference type="NCBIfam" id="TIGR00652">
    <property type="entry name" value="DapF"/>
    <property type="match status" value="1"/>
</dbReference>
<dbReference type="PANTHER" id="PTHR31689:SF0">
    <property type="entry name" value="DIAMINOPIMELATE EPIMERASE"/>
    <property type="match status" value="1"/>
</dbReference>
<dbReference type="PANTHER" id="PTHR31689">
    <property type="entry name" value="DIAMINOPIMELATE EPIMERASE, CHLOROPLASTIC"/>
    <property type="match status" value="1"/>
</dbReference>
<dbReference type="Pfam" id="PF01678">
    <property type="entry name" value="DAP_epimerase"/>
    <property type="match status" value="2"/>
</dbReference>
<dbReference type="SUPFAM" id="SSF54506">
    <property type="entry name" value="Diaminopimelate epimerase-like"/>
    <property type="match status" value="2"/>
</dbReference>
<dbReference type="PROSITE" id="PS01326">
    <property type="entry name" value="DAP_EPIMERASE"/>
    <property type="match status" value="1"/>
</dbReference>
<evidence type="ECO:0000255" key="1">
    <source>
        <dbReference type="HAMAP-Rule" id="MF_00197"/>
    </source>
</evidence>
<organism>
    <name type="scientific">Xanthomonas oryzae pv. oryzae (strain MAFF 311018)</name>
    <dbReference type="NCBI Taxonomy" id="342109"/>
    <lineage>
        <taxon>Bacteria</taxon>
        <taxon>Pseudomonadati</taxon>
        <taxon>Pseudomonadota</taxon>
        <taxon>Gammaproteobacteria</taxon>
        <taxon>Lysobacterales</taxon>
        <taxon>Lysobacteraceae</taxon>
        <taxon>Xanthomonas</taxon>
    </lineage>
</organism>
<name>DAPF_XANOM</name>
<feature type="chain" id="PRO_1000011985" description="Diaminopimelate epimerase">
    <location>
        <begin position="1"/>
        <end position="284"/>
    </location>
</feature>
<feature type="active site" description="Proton donor" evidence="1">
    <location>
        <position position="82"/>
    </location>
</feature>
<feature type="active site" description="Proton acceptor" evidence="1">
    <location>
        <position position="227"/>
    </location>
</feature>
<feature type="binding site" evidence="1">
    <location>
        <position position="20"/>
    </location>
    <ligand>
        <name>substrate</name>
    </ligand>
</feature>
<feature type="binding site" evidence="1">
    <location>
        <position position="53"/>
    </location>
    <ligand>
        <name>substrate</name>
    </ligand>
</feature>
<feature type="binding site" evidence="1">
    <location>
        <position position="73"/>
    </location>
    <ligand>
        <name>substrate</name>
    </ligand>
</feature>
<feature type="binding site" evidence="1">
    <location>
        <begin position="83"/>
        <end position="84"/>
    </location>
    <ligand>
        <name>substrate</name>
    </ligand>
</feature>
<feature type="binding site" evidence="1">
    <location>
        <position position="167"/>
    </location>
    <ligand>
        <name>substrate</name>
    </ligand>
</feature>
<feature type="binding site" evidence="1">
    <location>
        <position position="200"/>
    </location>
    <ligand>
        <name>substrate</name>
    </ligand>
</feature>
<feature type="binding site" evidence="1">
    <location>
        <begin position="218"/>
        <end position="219"/>
    </location>
    <ligand>
        <name>substrate</name>
    </ligand>
</feature>
<feature type="binding site" evidence="1">
    <location>
        <begin position="228"/>
        <end position="229"/>
    </location>
    <ligand>
        <name>substrate</name>
    </ligand>
</feature>
<feature type="site" description="Could be important to modulate the pK values of the two catalytic cysteine residues" evidence="1">
    <location>
        <position position="169"/>
    </location>
</feature>
<feature type="site" description="Could be important to modulate the pK values of the two catalytic cysteine residues" evidence="1">
    <location>
        <position position="218"/>
    </location>
</feature>
<feature type="site" description="Important for dimerization" evidence="1">
    <location>
        <position position="278"/>
    </location>
</feature>
<reference key="1">
    <citation type="journal article" date="2005" name="Jpn. Agric. Res. Q.">
        <title>Genome sequence of Xanthomonas oryzae pv. oryzae suggests contribution of large numbers of effector genes and insertion sequences to its race diversity.</title>
        <authorList>
            <person name="Ochiai H."/>
            <person name="Inoue Y."/>
            <person name="Takeya M."/>
            <person name="Sasaki A."/>
            <person name="Kaku H."/>
        </authorList>
    </citation>
    <scope>NUCLEOTIDE SEQUENCE [LARGE SCALE GENOMIC DNA]</scope>
    <source>
        <strain>MAFF 311018</strain>
    </source>
</reference>
<protein>
    <recommendedName>
        <fullName evidence="1">Diaminopimelate epimerase</fullName>
        <shortName evidence="1">DAP epimerase</shortName>
        <ecNumber evidence="1">5.1.1.7</ecNumber>
    </recommendedName>
    <alternativeName>
        <fullName evidence="1">PLP-independent amino acid racemase</fullName>
    </alternativeName>
</protein>
<comment type="function">
    <text evidence="1">Catalyzes the stereoinversion of LL-2,6-diaminopimelate (L,L-DAP) to meso-diaminopimelate (meso-DAP), a precursor of L-lysine and an essential component of the bacterial peptidoglycan.</text>
</comment>
<comment type="catalytic activity">
    <reaction evidence="1">
        <text>(2S,6S)-2,6-diaminopimelate = meso-2,6-diaminopimelate</text>
        <dbReference type="Rhea" id="RHEA:15393"/>
        <dbReference type="ChEBI" id="CHEBI:57609"/>
        <dbReference type="ChEBI" id="CHEBI:57791"/>
        <dbReference type="EC" id="5.1.1.7"/>
    </reaction>
</comment>
<comment type="pathway">
    <text evidence="1">Amino-acid biosynthesis; L-lysine biosynthesis via DAP pathway; DL-2,6-diaminopimelate from LL-2,6-diaminopimelate: step 1/1.</text>
</comment>
<comment type="subunit">
    <text evidence="1">Homodimer.</text>
</comment>
<comment type="subcellular location">
    <subcellularLocation>
        <location evidence="1">Cytoplasm</location>
    </subcellularLocation>
</comment>
<comment type="similarity">
    <text evidence="1">Belongs to the diaminopimelate epimerase family.</text>
</comment>
<gene>
    <name evidence="1" type="primary">dapF</name>
    <name type="ordered locus">XOO3767</name>
</gene>
<sequence length="284" mass="30238">MSADGRSGRLRFTKMHGAGNDFVVLDLRDGTPPPDAALAAQLADRHFGVGCDQILTIEAPRSEGAVAAYGIWNSDGSAARQCGNGARCVAAWLVRDGIAQCERFIIDSPVTAHAVERLEGGRYAVAMGMPQFDPPQIPLAGFAHARDEYALPVHGDTVRFGAVSMGNPHAVVEVGRVDAAPVERVGTLLQQNAAFPDSVNVGFVQVVDPTHVRLRVFERGVGETLACGSGACAAAVVLMQRCRVERDVQVSLPGGELRIRWPCDHEQVVMSGPAVFVFDGEWNG</sequence>